<protein>
    <recommendedName>
        <fullName>Replicase polyprotein 1ab</fullName>
    </recommendedName>
    <alternativeName>
        <fullName>ORF1ab polyprotein</fullName>
    </alternativeName>
    <component>
        <recommendedName>
            <fullName>Nsp1-alpha papain-like cysteine proteinase</fullName>
            <ecNumber>3.4.22.-</ecNumber>
        </recommendedName>
        <alternativeName>
            <fullName>PCP1-alpha</fullName>
        </alternativeName>
    </component>
    <component>
        <recommendedName>
            <fullName>Nsp1-beta papain-like cysteine proteinase</fullName>
            <ecNumber>3.4.22.-</ecNumber>
        </recommendedName>
        <alternativeName>
            <fullName>PCP1-beta</fullName>
        </alternativeName>
    </component>
    <component>
        <recommendedName>
            <fullName>Nsp2 cysteine proteinase</fullName>
            <ecNumber>3.4.22.-</ecNumber>
        </recommendedName>
        <alternativeName>
            <fullName>CP2</fullName>
            <shortName>CP</shortName>
        </alternativeName>
    </component>
    <component>
        <recommendedName>
            <fullName>Non-structural protein 3</fullName>
            <shortName>Nsp3</shortName>
        </recommendedName>
    </component>
    <component>
        <recommendedName>
            <fullName>3C-like serine proteinase</fullName>
            <shortName>3CLSP</shortName>
            <ecNumber>3.4.21.-</ecNumber>
        </recommendedName>
        <alternativeName>
            <fullName>Nsp4</fullName>
        </alternativeName>
    </component>
    <component>
        <recommendedName>
            <fullName>Non-structural protein 5-6-7</fullName>
            <shortName>Nsp5-6-7</shortName>
        </recommendedName>
    </component>
    <component>
        <recommendedName>
            <fullName>Non-structural protein 5</fullName>
            <shortName>Nsp5</shortName>
        </recommendedName>
    </component>
    <component>
        <recommendedName>
            <fullName>Non-structural protein 6</fullName>
            <shortName>Nsp6</shortName>
        </recommendedName>
    </component>
    <component>
        <recommendedName>
            <fullName>Non-structural protein 7-alpha</fullName>
            <shortName>Nsp7-alpha</shortName>
        </recommendedName>
    </component>
    <component>
        <recommendedName>
            <fullName>Non-structural protein 7-beta</fullName>
            <shortName>Nsp7-beta</shortName>
        </recommendedName>
    </component>
    <component>
        <recommendedName>
            <fullName>Non-structural protein 8</fullName>
            <shortName>Nsp8</shortName>
        </recommendedName>
    </component>
    <component>
        <recommendedName>
            <fullName>RNA-directed RNA polymerase</fullName>
            <shortName>Pol</shortName>
            <shortName>RdRp</shortName>
            <ecNumber>2.7.7.48</ecNumber>
        </recommendedName>
        <alternativeName>
            <fullName>Nsp9</fullName>
        </alternativeName>
    </component>
    <component>
        <recommendedName>
            <fullName>Helicase</fullName>
            <shortName>Hel</shortName>
            <ecNumber>3.6.4.12</ecNumber>
            <ecNumber>3.6.4.13</ecNumber>
        </recommendedName>
        <alternativeName>
            <fullName>Nsp10</fullName>
        </alternativeName>
    </component>
    <component>
        <recommendedName>
            <fullName>Uridylate-specific endoribonuclease nsp11</fullName>
            <ecNumber>4.6.1.-</ecNumber>
        </recommendedName>
        <alternativeName>
            <fullName>Non-structural protein 11</fullName>
            <shortName>Nsp11</shortName>
        </alternativeName>
    </component>
    <component>
        <recommendedName>
            <fullName>Non-structural protein 12</fullName>
            <shortName>Nsp12</shortName>
        </recommendedName>
    </component>
</protein>
<proteinExistence type="evidence at protein level"/>
<dbReference type="EC" id="3.4.22.-"/>
<dbReference type="EC" id="3.4.21.-"/>
<dbReference type="EC" id="2.7.7.48"/>
<dbReference type="EC" id="3.6.4.12"/>
<dbReference type="EC" id="3.6.4.13"/>
<dbReference type="EC" id="4.6.1.-"/>
<dbReference type="EMBL" id="U15146">
    <property type="protein sequence ID" value="AAA85663.1"/>
    <property type="molecule type" value="Genomic_RNA"/>
</dbReference>
<dbReference type="EMBL" id="U15146">
    <property type="protein sequence ID" value="AAA85664.1"/>
    <property type="status" value="ALT_INIT"/>
    <property type="molecule type" value="Genomic_RNA"/>
</dbReference>
<dbReference type="EMBL" id="S69379">
    <property type="protein sequence ID" value="AAB30448.1"/>
    <property type="molecule type" value="Genomic_RNA"/>
</dbReference>
<dbReference type="EMBL" id="S50064">
    <property type="protein sequence ID" value="AAB19478.1"/>
    <property type="molecule type" value="mRNA"/>
</dbReference>
<dbReference type="EMBL" id="S50068">
    <property type="protein sequence ID" value="AAB19479.1"/>
    <property type="molecule type" value="mRNA"/>
</dbReference>
<dbReference type="PIR" id="B40901">
    <property type="entry name" value="B40901"/>
</dbReference>
<dbReference type="PIR" id="C40901">
    <property type="entry name" value="C40901"/>
</dbReference>
<dbReference type="PIR" id="JQ1998">
    <property type="entry name" value="JQ1998"/>
</dbReference>
<dbReference type="PIR" id="PQ0618">
    <property type="entry name" value="PQ0618"/>
</dbReference>
<dbReference type="RefSeq" id="NP_042572.1">
    <property type="nucleotide sequence ID" value="NC_001639.1"/>
</dbReference>
<dbReference type="SMR" id="Q83017"/>
<dbReference type="MEROPS" id="C31.001"/>
<dbReference type="Proteomes" id="UP000171571">
    <property type="component" value="Segment"/>
</dbReference>
<dbReference type="GO" id="GO:0033644">
    <property type="term" value="C:host cell membrane"/>
    <property type="evidence" value="ECO:0007669"/>
    <property type="project" value="UniProtKB-SubCell"/>
</dbReference>
<dbReference type="GO" id="GO:0044220">
    <property type="term" value="C:host cell perinuclear region of cytoplasm"/>
    <property type="evidence" value="ECO:0007669"/>
    <property type="project" value="UniProtKB-SubCell"/>
</dbReference>
<dbReference type="GO" id="GO:0016020">
    <property type="term" value="C:membrane"/>
    <property type="evidence" value="ECO:0007669"/>
    <property type="project" value="UniProtKB-KW"/>
</dbReference>
<dbReference type="GO" id="GO:0005524">
    <property type="term" value="F:ATP binding"/>
    <property type="evidence" value="ECO:0007669"/>
    <property type="project" value="UniProtKB-KW"/>
</dbReference>
<dbReference type="GO" id="GO:0016887">
    <property type="term" value="F:ATP hydrolysis activity"/>
    <property type="evidence" value="ECO:0007669"/>
    <property type="project" value="RHEA"/>
</dbReference>
<dbReference type="GO" id="GO:0004197">
    <property type="term" value="F:cysteine-type endopeptidase activity"/>
    <property type="evidence" value="ECO:0007669"/>
    <property type="project" value="InterPro"/>
</dbReference>
<dbReference type="GO" id="GO:0016829">
    <property type="term" value="F:lyase activity"/>
    <property type="evidence" value="ECO:0007669"/>
    <property type="project" value="UniProtKB-KW"/>
</dbReference>
<dbReference type="GO" id="GO:0003723">
    <property type="term" value="F:RNA binding"/>
    <property type="evidence" value="ECO:0007669"/>
    <property type="project" value="InterPro"/>
</dbReference>
<dbReference type="GO" id="GO:0003724">
    <property type="term" value="F:RNA helicase activity"/>
    <property type="evidence" value="ECO:0007669"/>
    <property type="project" value="UniProtKB-EC"/>
</dbReference>
<dbReference type="GO" id="GO:0004540">
    <property type="term" value="F:RNA nuclease activity"/>
    <property type="evidence" value="ECO:0007669"/>
    <property type="project" value="UniProtKB-ARBA"/>
</dbReference>
<dbReference type="GO" id="GO:0003968">
    <property type="term" value="F:RNA-directed RNA polymerase activity"/>
    <property type="evidence" value="ECO:0007669"/>
    <property type="project" value="UniProtKB-KW"/>
</dbReference>
<dbReference type="GO" id="GO:0004252">
    <property type="term" value="F:serine-type endopeptidase activity"/>
    <property type="evidence" value="ECO:0007669"/>
    <property type="project" value="InterPro"/>
</dbReference>
<dbReference type="GO" id="GO:0070008">
    <property type="term" value="F:serine-type exopeptidase activity"/>
    <property type="evidence" value="ECO:0007669"/>
    <property type="project" value="InterPro"/>
</dbReference>
<dbReference type="GO" id="GO:0008270">
    <property type="term" value="F:zinc ion binding"/>
    <property type="evidence" value="ECO:0007669"/>
    <property type="project" value="UniProtKB-KW"/>
</dbReference>
<dbReference type="GO" id="GO:0006351">
    <property type="term" value="P:DNA-templated transcription"/>
    <property type="evidence" value="ECO:0007669"/>
    <property type="project" value="InterPro"/>
</dbReference>
<dbReference type="GO" id="GO:0006508">
    <property type="term" value="P:proteolysis"/>
    <property type="evidence" value="ECO:0007669"/>
    <property type="project" value="UniProtKB-KW"/>
</dbReference>
<dbReference type="GO" id="GO:0019082">
    <property type="term" value="P:viral protein processing"/>
    <property type="evidence" value="ECO:0007669"/>
    <property type="project" value="InterPro"/>
</dbReference>
<dbReference type="GO" id="GO:0039694">
    <property type="term" value="P:viral RNA genome replication"/>
    <property type="evidence" value="ECO:0007669"/>
    <property type="project" value="InterPro"/>
</dbReference>
<dbReference type="GO" id="GO:0075523">
    <property type="term" value="P:viral translational frameshifting"/>
    <property type="evidence" value="ECO:0007669"/>
    <property type="project" value="UniProtKB-KW"/>
</dbReference>
<dbReference type="CDD" id="cd21410">
    <property type="entry name" value="1B_av_Nsp10-like"/>
    <property type="match status" value="1"/>
</dbReference>
<dbReference type="CDD" id="cd23189">
    <property type="entry name" value="Arteriviridae_RdRp"/>
    <property type="match status" value="1"/>
</dbReference>
<dbReference type="CDD" id="cd22528">
    <property type="entry name" value="av_Nsp3_ER-remodelling"/>
    <property type="match status" value="1"/>
</dbReference>
<dbReference type="CDD" id="cd17937">
    <property type="entry name" value="DEXXYc_viral_SF1-N"/>
    <property type="match status" value="1"/>
</dbReference>
<dbReference type="CDD" id="cd21160">
    <property type="entry name" value="NendoU_av_Nsp11-like"/>
    <property type="match status" value="1"/>
</dbReference>
<dbReference type="CDD" id="cd21166">
    <property type="entry name" value="NTD_av_Nsp11-like"/>
    <property type="match status" value="1"/>
</dbReference>
<dbReference type="CDD" id="cd18786">
    <property type="entry name" value="SF1_C"/>
    <property type="match status" value="1"/>
</dbReference>
<dbReference type="CDD" id="cd21405">
    <property type="entry name" value="ZBD_av_Nsp10-like"/>
    <property type="match status" value="1"/>
</dbReference>
<dbReference type="Gene3D" id="3.90.70.160">
    <property type="match status" value="1"/>
</dbReference>
<dbReference type="Gene3D" id="4.10.80.390">
    <property type="match status" value="1"/>
</dbReference>
<dbReference type="Gene3D" id="3.30.1330.220">
    <property type="entry name" value="Arterivirus nonstructural protein 7 alpha"/>
    <property type="match status" value="1"/>
</dbReference>
<dbReference type="Gene3D" id="3.90.70.70">
    <property type="entry name" value="Arterivirus papain-like cysteine protease beta domain"/>
    <property type="match status" value="1"/>
</dbReference>
<dbReference type="Gene3D" id="3.30.40.20">
    <property type="entry name" value="Chymotrypsin-like serine protease, domain 3"/>
    <property type="match status" value="1"/>
</dbReference>
<dbReference type="Gene3D" id="3.40.50.300">
    <property type="entry name" value="P-loop containing nucleotide triphosphate hydrolases"/>
    <property type="match status" value="1"/>
</dbReference>
<dbReference type="Gene3D" id="3.90.70.60">
    <property type="entry name" value="Porcine arterivirus-type cysteine proteinase alpha domain"/>
    <property type="match status" value="1"/>
</dbReference>
<dbReference type="Gene3D" id="2.40.10.10">
    <property type="entry name" value="Trypsin-like serine proteases"/>
    <property type="match status" value="2"/>
</dbReference>
<dbReference type="InterPro" id="IPR027351">
    <property type="entry name" value="(+)RNA_virus_helicase_core_dom"/>
</dbReference>
<dbReference type="InterPro" id="IPR031932">
    <property type="entry name" value="Arteri_nsp7a"/>
</dbReference>
<dbReference type="InterPro" id="IPR038451">
    <property type="entry name" value="Arteri_nsp7a_sf"/>
</dbReference>
<dbReference type="InterPro" id="IPR008743">
    <property type="entry name" value="Arterivirus_Nsp2_C33"/>
</dbReference>
<dbReference type="InterPro" id="IPR023338">
    <property type="entry name" value="Arterivirus_NSP4_peptidase"/>
</dbReference>
<dbReference type="InterPro" id="IPR046440">
    <property type="entry name" value="AV_NSP11N_COV_NSP15M"/>
</dbReference>
<dbReference type="InterPro" id="IPR008741">
    <property type="entry name" value="AV_PCPalpha"/>
</dbReference>
<dbReference type="InterPro" id="IPR038155">
    <property type="entry name" value="AV_PCPalpha_sf"/>
</dbReference>
<dbReference type="InterPro" id="IPR025773">
    <property type="entry name" value="AV_PCPbeta"/>
</dbReference>
<dbReference type="InterPro" id="IPR038154">
    <property type="entry name" value="AV_PCPbeta_sf"/>
</dbReference>
<dbReference type="InterPro" id="IPR023183">
    <property type="entry name" value="Chymotrypsin-like_C"/>
</dbReference>
<dbReference type="InterPro" id="IPR043502">
    <property type="entry name" value="DNA/RNA_pol_sf"/>
</dbReference>
<dbReference type="InterPro" id="IPR022230">
    <property type="entry name" value="DUF3756"/>
</dbReference>
<dbReference type="InterPro" id="IPR008760">
    <property type="entry name" value="EAV_peptidase_S32"/>
</dbReference>
<dbReference type="InterPro" id="IPR037227">
    <property type="entry name" value="EndoU-like"/>
</dbReference>
<dbReference type="InterPro" id="IPR043609">
    <property type="entry name" value="NendoU_nidovirus"/>
</dbReference>
<dbReference type="InterPro" id="IPR044863">
    <property type="entry name" value="NIRAN"/>
</dbReference>
<dbReference type="InterPro" id="IPR044348">
    <property type="entry name" value="NSP10_1B_Av"/>
</dbReference>
<dbReference type="InterPro" id="IPR027355">
    <property type="entry name" value="NSP10_Av_ZBD"/>
</dbReference>
<dbReference type="InterPro" id="IPR044320">
    <property type="entry name" value="NSP11_Av_N"/>
</dbReference>
<dbReference type="InterPro" id="IPR044314">
    <property type="entry name" value="NSP11_NendoU_Av"/>
</dbReference>
<dbReference type="InterPro" id="IPR054104">
    <property type="entry name" value="Nsp1alpha_Znf"/>
</dbReference>
<dbReference type="InterPro" id="IPR027417">
    <property type="entry name" value="P-loop_NTPase"/>
</dbReference>
<dbReference type="InterPro" id="IPR009003">
    <property type="entry name" value="Peptidase_S1_PA"/>
</dbReference>
<dbReference type="InterPro" id="IPR043504">
    <property type="entry name" value="Peptidase_S1_PA_chymotrypsin"/>
</dbReference>
<dbReference type="InterPro" id="IPR001205">
    <property type="entry name" value="RNA-dir_pol_C"/>
</dbReference>
<dbReference type="InterPro" id="IPR007094">
    <property type="entry name" value="RNA-dir_pol_PSvirus"/>
</dbReference>
<dbReference type="Pfam" id="PF16749">
    <property type="entry name" value="Arteri_nsp7a"/>
    <property type="match status" value="1"/>
</dbReference>
<dbReference type="Pfam" id="PF12581">
    <property type="entry name" value="DUF3756"/>
    <property type="match status" value="1"/>
</dbReference>
<dbReference type="Pfam" id="PF05410">
    <property type="entry name" value="Peptidase_C31"/>
    <property type="match status" value="1"/>
</dbReference>
<dbReference type="Pfam" id="PF05411">
    <property type="entry name" value="Peptidase_C32"/>
    <property type="match status" value="1"/>
</dbReference>
<dbReference type="Pfam" id="PF05412">
    <property type="entry name" value="Peptidase_C33"/>
    <property type="match status" value="1"/>
</dbReference>
<dbReference type="Pfam" id="PF05579">
    <property type="entry name" value="Peptidase_S32"/>
    <property type="match status" value="1"/>
</dbReference>
<dbReference type="Pfam" id="PF22049">
    <property type="entry name" value="PRRSV-NSP11_N"/>
    <property type="match status" value="1"/>
</dbReference>
<dbReference type="Pfam" id="PF00680">
    <property type="entry name" value="RdRP_1"/>
    <property type="match status" value="1"/>
</dbReference>
<dbReference type="Pfam" id="PF01443">
    <property type="entry name" value="Viral_helicase1"/>
    <property type="match status" value="1"/>
</dbReference>
<dbReference type="Pfam" id="PF21905">
    <property type="entry name" value="Zf-Nsp1alpha"/>
    <property type="match status" value="1"/>
</dbReference>
<dbReference type="SUPFAM" id="SSF56672">
    <property type="entry name" value="DNA/RNA polymerases"/>
    <property type="match status" value="1"/>
</dbReference>
<dbReference type="SUPFAM" id="SSF142877">
    <property type="entry name" value="EndoU-like"/>
    <property type="match status" value="1"/>
</dbReference>
<dbReference type="SUPFAM" id="SSF52540">
    <property type="entry name" value="P-loop containing nucleoside triphosphate hydrolases"/>
    <property type="match status" value="2"/>
</dbReference>
<dbReference type="SUPFAM" id="SSF50494">
    <property type="entry name" value="Trypsin-like serine proteases"/>
    <property type="match status" value="1"/>
</dbReference>
<dbReference type="PROSITE" id="PS51538">
    <property type="entry name" value="AV_CP"/>
    <property type="match status" value="1"/>
</dbReference>
<dbReference type="PROSITE" id="PS51961">
    <property type="entry name" value="AV_NSP11N_COV_NSP15M"/>
    <property type="match status" value="1"/>
</dbReference>
<dbReference type="PROSITE" id="PS51493">
    <property type="entry name" value="AV_NSP4_PRO"/>
    <property type="match status" value="1"/>
</dbReference>
<dbReference type="PROSITE" id="PS51539">
    <property type="entry name" value="AV_PCP_ALPHA"/>
    <property type="match status" value="1"/>
</dbReference>
<dbReference type="PROSITE" id="PS51540">
    <property type="entry name" value="AV_PCP_BETA"/>
    <property type="match status" value="1"/>
</dbReference>
<dbReference type="PROSITE" id="PS51652">
    <property type="entry name" value="AV_ZBD"/>
    <property type="match status" value="1"/>
</dbReference>
<dbReference type="PROSITE" id="PS51958">
    <property type="entry name" value="NENDOU"/>
    <property type="match status" value="1"/>
</dbReference>
<dbReference type="PROSITE" id="PS51947">
    <property type="entry name" value="NIRAN"/>
    <property type="match status" value="1"/>
</dbReference>
<dbReference type="PROSITE" id="PS51657">
    <property type="entry name" value="PSRV_HELICASE"/>
    <property type="match status" value="1"/>
</dbReference>
<dbReference type="PROSITE" id="PS50507">
    <property type="entry name" value="RDRP_SSRNA_POS"/>
    <property type="match status" value="1"/>
</dbReference>
<organismHost>
    <name type="scientific">Mus musculus domesticus</name>
    <name type="common">western European house mouse</name>
    <dbReference type="NCBI Taxonomy" id="10092"/>
</organismHost>
<accession>Q83017</accession>
<accession>Q83018</accession>
<accession>Q83024</accession>
<accession>Q83025</accession>
<accession>Q86716</accession>
<name>RPOA_LDVP</name>
<feature type="chain" id="PRO_0000036644" description="Replicase polyprotein 1ab">
    <location>
        <begin position="1"/>
        <end position="3616"/>
    </location>
</feature>
<feature type="chain" id="PRO_0000036646" description="Nsp1-alpha papain-like cysteine proteinase" evidence="1">
    <location>
        <begin position="1"/>
        <end status="unknown"/>
    </location>
</feature>
<feature type="chain" id="PRO_0000036647" description="Nsp1-beta papain-like cysteine proteinase" evidence="1">
    <location>
        <begin status="unknown"/>
        <end position="380"/>
    </location>
</feature>
<feature type="chain" id="PRO_0000036648" description="Nsp2 cysteine proteinase" evidence="1">
    <location>
        <begin position="381"/>
        <end position="1286"/>
    </location>
</feature>
<feature type="chain" id="PRO_0000036649" description="Non-structural protein 3" evidence="1">
    <location>
        <begin position="1287"/>
        <end position="1512"/>
    </location>
</feature>
<feature type="chain" id="PRO_0000036650" description="3C-like serine proteinase" evidence="1">
    <location>
        <begin position="1513"/>
        <end position="1714"/>
    </location>
</feature>
<feature type="chain" id="PRO_0000036651" description="Non-structural protein 5-6-7" evidence="1">
    <location>
        <begin position="1715"/>
        <end position="2161"/>
    </location>
</feature>
<feature type="chain" id="PRO_0000423114" description="Non-structural protein 5" evidence="1">
    <location>
        <begin position="1715"/>
        <end position="1878"/>
    </location>
</feature>
<feature type="chain" id="PRO_0000423115" description="Non-structural protein 6" evidence="1">
    <location>
        <begin position="1879"/>
        <end position="1894"/>
    </location>
</feature>
<feature type="chain" id="PRO_0000423116" description="Non-structural protein 7-alpha" evidence="1">
    <location>
        <begin position="1895"/>
        <end position="2026"/>
    </location>
</feature>
<feature type="chain" id="PRO_0000423117" description="Non-structural protein 7-beta" evidence="1">
    <location>
        <begin position="2027"/>
        <end position="2161"/>
    </location>
</feature>
<feature type="chain" id="PRO_0000036652" description="RNA-directed RNA polymerase" evidence="1">
    <location>
        <begin position="2162"/>
        <end position="2843"/>
    </location>
</feature>
<feature type="chain" id="PRO_0000036653" description="Non-structural protein 8" evidence="1">
    <location>
        <begin position="2162"/>
        <end position="2206"/>
    </location>
</feature>
<feature type="chain" id="PRO_0000036654" description="Helicase" evidence="1">
    <location>
        <begin position="2844"/>
        <end position="3272"/>
    </location>
</feature>
<feature type="chain" id="PRO_0000036655" description="Uridylate-specific endoribonuclease nsp11" evidence="1">
    <location>
        <begin position="3273"/>
        <end position="3494"/>
    </location>
</feature>
<feature type="chain" id="PRO_0000036656" description="Non-structural protein 12" evidence="1">
    <location>
        <begin position="3495"/>
        <end position="3616"/>
    </location>
</feature>
<feature type="transmembrane region" description="Helical" evidence="4">
    <location>
        <begin position="942"/>
        <end position="962"/>
    </location>
</feature>
<feature type="transmembrane region" description="Helical" evidence="4">
    <location>
        <begin position="977"/>
        <end position="997"/>
    </location>
</feature>
<feature type="transmembrane region" description="Helical" evidence="4">
    <location>
        <begin position="1010"/>
        <end position="1030"/>
    </location>
</feature>
<feature type="transmembrane region" description="Helical" evidence="4">
    <location>
        <begin position="1060"/>
        <end position="1080"/>
    </location>
</feature>
<feature type="transmembrane region" description="Helical" evidence="4">
    <location>
        <begin position="1085"/>
        <end position="1105"/>
    </location>
</feature>
<feature type="transmembrane region" description="Helical" evidence="4">
    <location>
        <begin position="1289"/>
        <end position="1309"/>
    </location>
</feature>
<feature type="transmembrane region" description="Helical" evidence="4">
    <location>
        <begin position="1364"/>
        <end position="1384"/>
    </location>
</feature>
<feature type="transmembrane region" description="Helical" evidence="4">
    <location>
        <begin position="1386"/>
        <end position="1406"/>
    </location>
</feature>
<feature type="transmembrane region" description="Helical" evidence="4">
    <location>
        <begin position="1425"/>
        <end position="1445"/>
    </location>
</feature>
<feature type="transmembrane region" description="Helical" evidence="4">
    <location>
        <begin position="1715"/>
        <end position="1735"/>
    </location>
</feature>
<feature type="transmembrane region" description="Helical" evidence="4">
    <location>
        <begin position="1737"/>
        <end position="1757"/>
    </location>
</feature>
<feature type="transmembrane region" description="Helical" evidence="4">
    <location>
        <begin position="1761"/>
        <end position="1781"/>
    </location>
</feature>
<feature type="transmembrane region" description="Helical" evidence="4">
    <location>
        <begin position="1832"/>
        <end position="1852"/>
    </location>
</feature>
<feature type="domain" description="Peptidase C31" evidence="8">
    <location>
        <begin position="69"/>
        <end position="181"/>
    </location>
</feature>
<feature type="domain" description="Peptidase C32" evidence="9">
    <location>
        <begin position="262"/>
        <end position="381"/>
    </location>
</feature>
<feature type="domain" description="Peptidase C33" evidence="7">
    <location>
        <begin position="381"/>
        <end position="486"/>
    </location>
</feature>
<feature type="domain" description="Peptidase S32" evidence="6">
    <location>
        <begin position="1513"/>
        <end position="1714"/>
    </location>
</feature>
<feature type="domain" description="NiRAN" evidence="11">
    <location>
        <begin position="2194"/>
        <end position="2352"/>
    </location>
</feature>
<feature type="domain" description="RdRp catalytic" evidence="5">
    <location>
        <begin position="2590"/>
        <end position="2724"/>
    </location>
</feature>
<feature type="domain" description="AV ZBD" evidence="10">
    <location>
        <begin position="2844"/>
        <end position="2907"/>
    </location>
</feature>
<feature type="domain" description="(+)RNA virus helicase ATP-binding">
    <location>
        <begin position="2964"/>
        <end position="3116"/>
    </location>
</feature>
<feature type="domain" description="(+)RNA virus helicase C-terminal">
    <location>
        <begin position="3117"/>
        <end position="3248"/>
    </location>
</feature>
<feature type="domain" description="AV-Nsp11N/CoV-Nsp15M" evidence="13">
    <location>
        <begin position="3272"/>
        <end position="3368"/>
    </location>
</feature>
<feature type="domain" description="NendoU" evidence="12">
    <location>
        <begin position="3370"/>
        <end position="3492"/>
    </location>
</feature>
<feature type="zinc finger region" description="C4-type; atypical">
    <location>
        <begin position="8"/>
        <end position="28"/>
    </location>
</feature>
<feature type="region of interest" description="Disordered" evidence="14">
    <location>
        <begin position="672"/>
        <end position="706"/>
    </location>
</feature>
<feature type="region of interest" description="Disordered" evidence="14">
    <location>
        <begin position="883"/>
        <end position="912"/>
    </location>
</feature>
<feature type="region of interest" description="HD1">
    <location>
        <begin position="981"/>
        <end position="1105"/>
    </location>
</feature>
<feature type="region of interest" description="HD2">
    <location>
        <begin position="1289"/>
        <end position="1448"/>
    </location>
</feature>
<feature type="region of interest" description="HD3">
    <location>
        <begin position="1737"/>
        <end position="1852"/>
    </location>
</feature>
<feature type="compositionally biased region" description="Basic residues" evidence="14">
    <location>
        <begin position="676"/>
        <end position="690"/>
    </location>
</feature>
<feature type="compositionally biased region" description="Polar residues" evidence="14">
    <location>
        <begin position="903"/>
        <end position="912"/>
    </location>
</feature>
<feature type="active site" description="For Nsp1-alpha papain-like cysteine proteinase activity" evidence="8 15">
    <location>
        <position position="76"/>
    </location>
</feature>
<feature type="active site" description="For Nsp1-alpha papain-like cysteine proteinase activity" evidence="8 15">
    <location>
        <position position="147"/>
    </location>
</feature>
<feature type="active site" description="For Nsp1-beta papain-like cysteine proteinase activity" evidence="9 15">
    <location>
        <position position="269"/>
    </location>
</feature>
<feature type="active site" description="For Nsp1-beta papain-like cysteine proteinase activity" evidence="9 15">
    <location>
        <position position="340"/>
    </location>
</feature>
<feature type="active site" description="For Nsp2 cysteine proteinase activity" evidence="7">
    <location>
        <position position="390"/>
    </location>
</feature>
<feature type="active site" description="For Nsp2 cysteine proteinase activity" evidence="7">
    <location>
        <position position="456"/>
    </location>
</feature>
<feature type="active site" description="Charge relay system; for 3C-like serine proteinase activity" evidence="6">
    <location>
        <position position="1551"/>
    </location>
</feature>
<feature type="active site" description="Charge relay system; for 3C-like serine proteinase activity" evidence="6">
    <location>
        <position position="1576"/>
    </location>
</feature>
<feature type="active site" description="Charge relay system; for 3C-like serine proteinase activity" evidence="6">
    <location>
        <position position="1628"/>
    </location>
</feature>
<feature type="binding site" evidence="10">
    <location>
        <position position="2850"/>
    </location>
    <ligand>
        <name>Zn(2+)</name>
        <dbReference type="ChEBI" id="CHEBI:29105"/>
        <label>1</label>
    </ligand>
</feature>
<feature type="binding site" evidence="10">
    <location>
        <position position="2853"/>
    </location>
    <ligand>
        <name>Zn(2+)</name>
        <dbReference type="ChEBI" id="CHEBI:29105"/>
        <label>1</label>
    </ligand>
</feature>
<feature type="binding site" evidence="10">
    <location>
        <position position="2863"/>
    </location>
    <ligand>
        <name>Zn(2+)</name>
        <dbReference type="ChEBI" id="CHEBI:29105"/>
        <label>2</label>
    </ligand>
</feature>
<feature type="binding site" evidence="10">
    <location>
        <position position="2868"/>
    </location>
    <ligand>
        <name>Zn(2+)</name>
        <dbReference type="ChEBI" id="CHEBI:29105"/>
        <label>1</label>
    </ligand>
</feature>
<feature type="binding site" evidence="10">
    <location>
        <position position="2871"/>
    </location>
    <ligand>
        <name>Zn(2+)</name>
        <dbReference type="ChEBI" id="CHEBI:29105"/>
        <label>1</label>
    </ligand>
</feature>
<feature type="binding site" evidence="10">
    <location>
        <position position="2873"/>
    </location>
    <ligand>
        <name>Zn(2+)</name>
        <dbReference type="ChEBI" id="CHEBI:29105"/>
        <label>2</label>
    </ligand>
</feature>
<feature type="binding site" evidence="10">
    <location>
        <position position="2875"/>
    </location>
    <ligand>
        <name>Zn(2+)</name>
        <dbReference type="ChEBI" id="CHEBI:29105"/>
        <label>2</label>
    </ligand>
</feature>
<feature type="binding site" evidence="10">
    <location>
        <position position="2877"/>
    </location>
    <ligand>
        <name>Zn(2+)</name>
        <dbReference type="ChEBI" id="CHEBI:29105"/>
        <label>2</label>
    </ligand>
</feature>
<feature type="binding site" evidence="10">
    <location>
        <position position="2884"/>
    </location>
    <ligand>
        <name>Zn(2+)</name>
        <dbReference type="ChEBI" id="CHEBI:29105"/>
        <label>3</label>
    </ligand>
</feature>
<feature type="binding site" evidence="10">
    <location>
        <position position="2886"/>
    </location>
    <ligand>
        <name>Zn(2+)</name>
        <dbReference type="ChEBI" id="CHEBI:29105"/>
        <label>3</label>
    </ligand>
</feature>
<feature type="binding site" evidence="10">
    <location>
        <position position="2893"/>
    </location>
    <ligand>
        <name>Zn(2+)</name>
        <dbReference type="ChEBI" id="CHEBI:29105"/>
        <label>3</label>
    </ligand>
</feature>
<feature type="binding site" evidence="10">
    <location>
        <position position="2896"/>
    </location>
    <ligand>
        <name>Zn(2+)</name>
        <dbReference type="ChEBI" id="CHEBI:29105"/>
        <label>3</label>
    </ligand>
</feature>
<feature type="binding site" evidence="1">
    <location>
        <begin position="2992"/>
        <end position="2999"/>
    </location>
    <ligand>
        <name>ATP</name>
        <dbReference type="ChEBI" id="CHEBI:30616"/>
    </ligand>
</feature>
<feature type="site" description="Cleavage; by autolysis" evidence="4">
    <location>
        <begin position="181"/>
        <end position="182"/>
    </location>
</feature>
<feature type="site" description="Cleavage; by autolysis" evidence="4">
    <location>
        <begin position="381"/>
        <end position="382"/>
    </location>
</feature>
<feature type="site" description="Cleavage; by CP2" evidence="1">
    <location>
        <begin position="1286"/>
        <end position="1287"/>
    </location>
</feature>
<feature type="site" description="Cleavage; by 3CLSP" evidence="1">
    <location>
        <begin position="1512"/>
        <end position="1513"/>
    </location>
</feature>
<feature type="site" description="Cleavage; by 3CLSP" evidence="1">
    <location>
        <begin position="1714"/>
        <end position="1715"/>
    </location>
</feature>
<feature type="site" description="Cleavage; by 3CLSP" evidence="1">
    <location>
        <begin position="1878"/>
        <end position="1879"/>
    </location>
</feature>
<feature type="site" description="Cleavage; by 3CLSP" evidence="1">
    <location>
        <begin position="1894"/>
        <end position="1895"/>
    </location>
</feature>
<feature type="site" description="Cleavage; by 3CLSP" evidence="1">
    <location>
        <begin position="2026"/>
        <end position="2027"/>
    </location>
</feature>
<feature type="site" description="Cleavage; by 3CLSP" evidence="1">
    <location>
        <begin position="2161"/>
        <end position="2162"/>
    </location>
</feature>
<feature type="site" description="Cleavage; by 3CLSP" evidence="1">
    <location>
        <begin position="2843"/>
        <end position="2844"/>
    </location>
</feature>
<feature type="site" description="Cleavage; by 3CLSP" evidence="1">
    <location>
        <begin position="3272"/>
        <end position="3273"/>
    </location>
</feature>
<feature type="site" description="Cleavage; by 3CLSP" evidence="1">
    <location>
        <begin position="3494"/>
        <end position="3495"/>
    </location>
</feature>
<feature type="splice variant" id="VSP_032889" description="In isoform Replicase polyprotein 1a." evidence="16">
    <location>
        <begin position="2207"/>
        <end position="3616"/>
    </location>
</feature>
<feature type="mutagenesis site" description="Complete loss of cleavage between nsp1-alpha and nsp1-beta." evidence="15">
    <original>C</original>
    <variation>S</variation>
    <location>
        <position position="76"/>
    </location>
</feature>
<feature type="mutagenesis site" description="Complete loss of cleavage between nsp1-beta and nsp2." evidence="15">
    <original>C</original>
    <variation>A</variation>
    <location>
        <position position="269"/>
    </location>
</feature>
<feature type="sequence conflict" description="In Ref. 3." evidence="16" ref="3">
    <original>E</original>
    <variation>K</variation>
    <location>
        <position position="1185"/>
    </location>
</feature>
<feature type="sequence conflict" description="In Ref. 3." evidence="16" ref="3">
    <original>SEPKLP</original>
    <variation>QNPNFL</variation>
    <location>
        <begin position="2748"/>
        <end position="2753"/>
    </location>
</feature>
<feature type="sequence conflict" description="In Ref. 3." evidence="16" ref="3">
    <original>VAALAYQ</original>
    <variation>RRGASVS</variation>
    <location>
        <begin position="2771"/>
        <end position="2777"/>
    </location>
</feature>
<feature type="sequence conflict" description="In Ref. 3." evidence="16" ref="3">
    <original>GSPW</original>
    <variation>RKEG</variation>
    <location>
        <begin position="2820"/>
        <end position="2823"/>
    </location>
</feature>
<feature type="sequence conflict" description="In Ref. 3." evidence="16" ref="3">
    <original>E</original>
    <variation>K</variation>
    <location>
        <position position="2843"/>
    </location>
</feature>
<comment type="function">
    <text>The replicase polyprotein 1ab is a multifunctional protein: it contains the activities necessary for the transcription of negative stranded RNA, leader RNA, subgenomic mRNAs and progeny virion RNA as well as proteinases responsible for the cleavage of the polyprotein into functional products.</text>
</comment>
<comment type="function">
    <text evidence="1">The Nsp1 chain is essential for viral subgenomic mRNA synthesis.</text>
</comment>
<comment type="function">
    <text evidence="1">The 3C-like serine proteinase chain is responsible for the majority of cleavages as it cleaves the C-terminus of the polyprotein.</text>
</comment>
<comment type="function">
    <text evidence="1">The helicase chain, which contains a zinc finger structure, displays RNA and DNA duplex-unwinding activities with 5' to 3' polarity.</text>
</comment>
<comment type="function">
    <molecule>Uridylate-specific endoribonuclease nsp11</molecule>
    <text evidence="2 3">Plays a role in viral transcription/replication and prevents the simultaneous activation of host cell dsRNA sensors, such as MDA5/IFIH1, OAS, and PKR (By similarity). Acts by degrading the 5'-polyuridines generated during replication of the poly(A) region of viral genomic and subgenomic RNAs. Catalyzes a two-step reaction in which a 2'3'-cyclic phosphate (2'3'-cP) is first generated by 2'-O transesterification, which is then hydrolyzed to a 3'-phosphate (3'-P) (By similarity). If not degraded, poly(U) RNA would hybridize with poly(A) RNA tails and activate host dsRNA sensors (By similarity).</text>
</comment>
<comment type="catalytic activity">
    <reaction evidence="5">
        <text>RNA(n) + a ribonucleoside 5'-triphosphate = RNA(n+1) + diphosphate</text>
        <dbReference type="Rhea" id="RHEA:21248"/>
        <dbReference type="Rhea" id="RHEA-COMP:14527"/>
        <dbReference type="Rhea" id="RHEA-COMP:17342"/>
        <dbReference type="ChEBI" id="CHEBI:33019"/>
        <dbReference type="ChEBI" id="CHEBI:61557"/>
        <dbReference type="ChEBI" id="CHEBI:140395"/>
        <dbReference type="EC" id="2.7.7.48"/>
    </reaction>
</comment>
<comment type="catalytic activity">
    <reaction>
        <text>ATP + H2O = ADP + phosphate + H(+)</text>
        <dbReference type="Rhea" id="RHEA:13065"/>
        <dbReference type="ChEBI" id="CHEBI:15377"/>
        <dbReference type="ChEBI" id="CHEBI:15378"/>
        <dbReference type="ChEBI" id="CHEBI:30616"/>
        <dbReference type="ChEBI" id="CHEBI:43474"/>
        <dbReference type="ChEBI" id="CHEBI:456216"/>
        <dbReference type="EC" id="3.6.4.12"/>
    </reaction>
</comment>
<comment type="catalytic activity">
    <reaction>
        <text>ATP + H2O = ADP + phosphate + H(+)</text>
        <dbReference type="Rhea" id="RHEA:13065"/>
        <dbReference type="ChEBI" id="CHEBI:15377"/>
        <dbReference type="ChEBI" id="CHEBI:15378"/>
        <dbReference type="ChEBI" id="CHEBI:30616"/>
        <dbReference type="ChEBI" id="CHEBI:43474"/>
        <dbReference type="ChEBI" id="CHEBI:456216"/>
        <dbReference type="EC" id="3.6.4.13"/>
    </reaction>
</comment>
<comment type="catalytic activity">
    <molecule>Uridylate-specific endoribonuclease nsp11</molecule>
    <reaction evidence="3">
        <text>uridylyl-uridylyl-ribonucleotide-RNA = a 3'-end uridylyl-2',3'-cyclophospho-uridine-RNA + a 5'-end dephospho-ribonucleoside-RNA</text>
        <dbReference type="Rhea" id="RHEA:67732"/>
        <dbReference type="Rhea" id="RHEA-COMP:13936"/>
        <dbReference type="Rhea" id="RHEA-COMP:17334"/>
        <dbReference type="Rhea" id="RHEA-COMP:17335"/>
        <dbReference type="ChEBI" id="CHEBI:138284"/>
        <dbReference type="ChEBI" id="CHEBI:173079"/>
        <dbReference type="ChEBI" id="CHEBI:173080"/>
    </reaction>
</comment>
<comment type="subcellular location">
    <molecule>Nsp2 cysteine proteinase</molecule>
    <subcellularLocation>
        <location evidence="16">Host membrane</location>
        <topology evidence="16">Multi-pass membrane protein</topology>
    </subcellularLocation>
</comment>
<comment type="subcellular location">
    <molecule>Non-structural protein 3</molecule>
    <subcellularLocation>
        <location evidence="16">Host membrane</location>
        <topology evidence="16">Multi-pass membrane protein</topology>
    </subcellularLocation>
</comment>
<comment type="subcellular location">
    <molecule>Non-structural protein 5-6-7</molecule>
    <subcellularLocation>
        <location evidence="16">Host membrane</location>
        <topology evidence="16">Multi-pass membrane protein</topology>
    </subcellularLocation>
</comment>
<comment type="subcellular location">
    <molecule>3C-like serine proteinase</molecule>
    <subcellularLocation>
        <location evidence="16">Host cytoplasm</location>
    </subcellularLocation>
</comment>
<comment type="subcellular location">
    <molecule>RNA-directed RNA polymerase</molecule>
    <subcellularLocation>
        <location evidence="16">Host cytoplasm</location>
        <location evidence="16">Host perinuclear region</location>
    </subcellularLocation>
</comment>
<comment type="subcellular location">
    <molecule>Helicase</molecule>
    <subcellularLocation>
        <location evidence="16">Host cytoplasm</location>
        <location evidence="16">Host perinuclear region</location>
    </subcellularLocation>
</comment>
<comment type="alternative products">
    <event type="ribosomal frameshifting"/>
    <isoform>
        <id>Q83017-1</id>
        <name>Replicase polyprotein 1ab</name>
        <name>pp1ab</name>
        <sequence type="displayed"/>
    </isoform>
    <isoform>
        <id>Q83017-2</id>
        <name>Replicase polyprotein 1a</name>
        <name>pp1a</name>
        <name>ORF1a polyprotein</name>
        <sequence type="described" ref="VSP_032889"/>
    </isoform>
</comment>
<comment type="domain">
    <text evidence="1">The hydrophobic domains (HD) could mediate the membrane association of the replication complex and thereby alter the architecture of the host cell membrane.</text>
</comment>
<comment type="PTM">
    <text evidence="1">Specific enzymatic cleavages in vivo by its own proteases yield mature proteins. There are two alternative pathways for processing. Either nsp4-5 is cleaved, which represents the major pathway or the nsp5-6 and nsp6-7 are processed, which represents the minor pathway. The major pathway occurs when nsp2 acts as a cofactor for nsp4 (By similarity).</text>
</comment>
<comment type="miscellaneous">
    <molecule>Isoform Replicase polyprotein 1ab</molecule>
    <text>Produced by -1 ribosomal frameshifting at the 1a-1b genes boundary.</text>
</comment>
<comment type="miscellaneous">
    <molecule>Isoform Replicase polyprotein 1a</molecule>
    <text evidence="16">Produced by conventional translation.</text>
</comment>
<comment type="similarity">
    <text evidence="16">Belongs to the arteriviridae polyprotein family.</text>
</comment>
<comment type="sequence caution" evidence="16">
    <conflict type="erroneous initiation">
        <sequence resource="EMBL-CDS" id="AAA85664"/>
    </conflict>
</comment>
<sequence>MQSGFDRCLCTPNARVFWEHGQVYCTRCLAARPLLPLSQQNPRLGALGLFYRPATPLTWEAPITYPTKECRPGGLCWLSGIYPIARMTSGNHNFQARLNFVASVVYRDGKLTSKHLEEEFEVYSRGCRWYPITGPVPGIALYANAVHVSDEPFPGCTHVLSNLPLPQQPLRKGLCPFSDARAEVWRYKGNTIFVSEQGYLWTTGSNDSVPEPWGEARRLCEKIIASLPADHLVKIEFSNYPFDYSFTGGDGAGYVLFPCKKNDTKFSKCWEKVFEDHSSWKVACEEADLADRMGYRTPAGVAGPYLARRLQYRGLRAVVKPEQNDYVVWALGVPESYIRHISRAGEPVENFFVRVGEFSIVSNCVATPYPKFRFQTRKYYGYSPPGDGACGLHCISAIINDIFGDALCTKLTNCSRDSSEWLSDQDMYQLVMTARLPATLGHCPSATYKLDCVNQHWTVTKRKGDRALGGLSPECVRGVCGGECKFVPTYPREINLELAAKSPISALAFSLGVEPYCDCWNFTNSVLVNDSLAVETARAGEAYRSAMGIPKDDWVLLAELMTENCLTRREVLDKLQRGLRLHATSKPGSPASVSPASSIDFSAAGLLLDGTESDKEAVVAVNNDCYTVLGFDKNSATKSEQELATGLFSELVEPMETSTSKHESRKILEAASRALKSAKPKRKRNKKKKTSSPTPTPPETPTREVPGAIEVVSGDEEAGACESATIVPDKAQARPPPRPKRQALKKAEQGFILKDIIWNPTESGVKCLTIVEDVRAFLKSITPPGGALGTRARITAHIVEQFHVIRESTPELVLAHAEHQAKNMHELLLSEKAKLILGIGEDTLKKLVSSQRSLPRSIGFGAWLSDQQKTADSCGEREFVEVPLKSGAEPTPSKRDLGVSLGDQLSQDGAPRLSSSTACEIKERVPPIKDSGGGLGQKFMAWLNHQVFLLSSHLLAMWSVVLGSRQKLNWADYVYTLFCLCCVLLCFHFPAIGFIPLAGCVFGSPWRVRLSVFSVWLCVAVVVFQEVLPEPGSVCSSASAECAAALERYSGNGVHRPVNHIGVGLVGTVAGFVARVVGGPRHYWFYFLRLMVVLDLGLVFLAVALRGRCKKCFCKCVRVAPHEVHLRVFPLTKVARPTLEAVCDMYSAPRVDPILVATGIKGCWQGKVSPHQVTDKPVSYSNLEEKKISNKTVVPPPTDPQQAVKCLKVLQCGGSIQDVGVPEVKKVSKVPYKAPFFPNVSIDPECYIVVDPVTYSAAMRGGYGVSHLIVGTGDFAEVNGLRFVSGGHVADFVCLGLYVMLNFLISAWLSSPVSCGRGTNDPWCKNPFSYPVVGQGVMCNSHLCISEDGLTSPMVLSYSLIDWALMIAVIATVAIFIAKVSLLVDVICVFLCLLMYVFPPLSVIAFAFPFALCKVHLHPVTLVWVQFFLLAVNFWAGVAVAVILISSWFLARATSSTGLVTPYDVHLVTSTPRGASSLASAPEGTYLAAVRRSALTGRCCMFVPTNFGSVLEGSLRTRGCAKNVVSVFGSASGSGGVFTIHGNPVVVTATHLLSDGKARVSCVGFSQCLTFKSVGDYAFARVAEWKGDAPKVELSDRRGRAYCSPQVEWSLVLLGPNTAFCFTKCGDSGSPVVDEDGNLIGVHTGSNKRGSGMITTHNGKTLGMSNVKLSEMCQHYGGSGVPVSTVRLPKHLIVDVEAVASDLVAVVESLPTPEGALSSVQLLCVFFFLWRLIHVPFVPVIAVAFFFLNEILPVVLARLMFSFALSLFSVFTGFSVQVLLLRLVIAALNRSAVSFGSFLLGQLFHCCLMPSHLETLGPVPGYFYPSTTEVASKEIFVTLLAIHVLALLLSLFKRPMLADVLVGNGSFDAAFFLKYFAEGNLRDGVSDSCNMTPEGLTAALAITLSDDDLEFLQRHSEFKCFVSASNMRNGAKEFIESAYARALRAQLAATDKIKASKSILAKLESFAGGVVTKVEPGDVVVVLGKKIVGDLVEITINDVKHVIRVIETRVMAGTQFSVGTICGDLENACEDPSGLVKTSKKQRRRQKRTGLGTEVVGTVEIDGVSYNKVWHKATGDVTYEGFLVSENSRLRTLGTSAIGRFQEFIRKHGSKVKTSVEKYPVGKNKHIEFAVTTYNLDGEEFDVPDHEPLEWTITIGDSDLEAERLTVDQALRHMGHDSLLTPKEKEKLARIIESLNGLQQSSALNCLTTSGLERCSRGGVTVSKDAVKIVKYHSRTFSIGDVNLKVMSFDEYRRTMGKPGHLLVAKLTDGVVVMRKHEPSLVDVILTGEDAEFFPRTHGPGNTGIHRFVWDFESPPVDLELELSEQIITACSMRRGDAPALDLPYKLHPVRGDPYRHRGVLFNTRFGDITYLIPEKTKEPLHAAACYNKGVPVSDSETLVATTLPHGFELYVPTLPPSVLEYLDSRPDTPRMLTKHGCASAAEKDLQKFDLSRQGFVLPGVLYMVRRYLSRLIGVRRRLFMPSTYPAKNSMAGINGGRFPLTWLQSHPDIDALCKRACEEHWQTVTPCTLKKQYCSKSKTRTILGTNNFVALGLRSALSGVTQGFMRKGIGTPICLGKNKFTPLPVRIGGRCLEADLASCDRSTPAIIRWFTTNLLFELAGAEEWIPSYVLNCCHDVVSTMSGCFDKRGGLSSGDPVTSISNTVYSLIIYAQHMVLSAFRCGHKIGGLFLQDSLEMEQLFELQPLLVYSDDVVFYNESDELPNYHFFVDHLDLMLGFKTDRSKTVITSEPKLPGCRISGGRVLVPQRDRIVAALAYQMKASCVGEYFASAAAILMDACACCDHDESWYFDLVCGIAECAGSPWFRFPGPSFFLDMWNRLSAEEKKKCRTCAHCGAPATLVSSCGLNLCDYHGHGHPHCPVVLPCGHAVGSGVCEQCSSSAMNLNTELDILLMCVPYHPPKVELLSVNDKVSSLPPGAYQARGGVVSVRRDILGNVVDLPDGDYQVMKVAQTCADISMVSVNSNILRSQFVTGAPGTGKTTYLLSVVRDDDVIYTPTHRTMLDVVKALKVCRFDPPKDTPLEFPVPGRTGPTVRLIGAGFVPGRVSYLDEAAYCNPLDVLKVLSKTPLVCVGDLNQLPPVGFNGPCFAFSLMPGRQLIEVFRFGPAVVNSIKKFYKEELVPRGPDTGVKFLKQYQPYGQVLTPYHRDRVDGAITIDSSQGCTYDVVTVYLPTPKSLNSARALVALTRARHYVFIYDPYDQLQQYLQVFEHEPADAWAFWCGDQPKMIVGGVVKQLAGHSRTTDLKLQQLMGLEGTASPLPQVGHNLGFYYSPDLIQFAKIPPELCKHWPVVTAQNRTEWPDRLVCGMNKMDKNSRAVFCAGYYVGPSIFLGVPGVVSYYLTKYLKGESVPLPDSIMSTGRIRLNVREYLDENEIEFAKKCPQPFIGEVKGSNVGGCHHVTSRFLPPVLVPGSVVKVGVSCPGKAAKGLCTVTDVYLPELDSYLHPPSKSMDYKLLVDFQPVKLMVWKDATAYFHEGIRPMEAMSRFLKVPEGEGVFFDLDEFVTNAKVSKLPCKYSVSAHQFLTEVVLSMTPTSEAPPDYELLFARAYCVPGLDVGTLNAYIYKRGPSTYTTSNFARLVKDTAVPVGCKGSGYMFPK</sequence>
<keyword id="KW-0067">ATP-binding</keyword>
<keyword id="KW-0347">Helicase</keyword>
<keyword id="KW-1035">Host cytoplasm</keyword>
<keyword id="KW-1043">Host membrane</keyword>
<keyword id="KW-0378">Hydrolase</keyword>
<keyword id="KW-0456">Lyase</keyword>
<keyword id="KW-0472">Membrane</keyword>
<keyword id="KW-0479">Metal-binding</keyword>
<keyword id="KW-0547">Nucleotide-binding</keyword>
<keyword id="KW-0548">Nucleotidyltransferase</keyword>
<keyword id="KW-0645">Protease</keyword>
<keyword id="KW-1185">Reference proteome</keyword>
<keyword id="KW-0688">Ribosomal frameshifting</keyword>
<keyword id="KW-0696">RNA-directed RNA polymerase</keyword>
<keyword id="KW-0720">Serine protease</keyword>
<keyword id="KW-0788">Thiol protease</keyword>
<keyword id="KW-0808">Transferase</keyword>
<keyword id="KW-0812">Transmembrane</keyword>
<keyword id="KW-1133">Transmembrane helix</keyword>
<keyword id="KW-0693">Viral RNA replication</keyword>
<keyword id="KW-0862">Zinc</keyword>
<keyword id="KW-0863">Zinc-finger</keyword>
<organism>
    <name type="scientific">Lactate dehydrogenase elevating virus (strain Plagemann)</name>
    <name type="common">LDV</name>
    <dbReference type="NCBI Taxonomy" id="300016"/>
    <lineage>
        <taxon>Viruses</taxon>
        <taxon>Riboviria</taxon>
        <taxon>Orthornavirae</taxon>
        <taxon>Pisuviricota</taxon>
        <taxon>Pisoniviricetes</taxon>
        <taxon>Nidovirales</taxon>
        <taxon>Arnidovirineae</taxon>
        <taxon>Arteriviridae</taxon>
        <taxon>Variarterivirinae</taxon>
        <taxon>Gammaarterivirus</taxon>
        <taxon>Gammaarterivirus lacdeh</taxon>
    </lineage>
</organism>
<reference key="1">
    <citation type="journal article" date="1995" name="Virology">
        <title>Sequence of the genome of lactate dehydrogenase-elevating virus: heterogenicity between strains P and C.</title>
        <authorList>
            <person name="Palmer G.A."/>
            <person name="Kuo L.L."/>
            <person name="Chen Z."/>
            <person name="Faaberg K.S."/>
            <person name="Plagemann P.G.W."/>
        </authorList>
    </citation>
    <scope>NUCLEOTIDE SEQUENCE [GENOMIC RNA]</scope>
</reference>
<reference key="2">
    <citation type="journal article" date="1994" name="J. Gen. Virol.">
        <title>Determination of the 5' end of the lactate dehydrogenase-elevating virus genome by two independent approaches.</title>
        <authorList>
            <person name="Chen Z."/>
            <person name="Faaberg K.S."/>
            <person name="Plagemann P.G.W."/>
        </authorList>
    </citation>
    <scope>NUCLEOTIDE SEQUENCE [GENOMIC RNA] OF 1-57</scope>
</reference>
<reference key="3">
    <citation type="journal article" date="1991" name="J. Virol.">
        <title>A nested set of eight RNAs is formed in macrophages infected with lactate dehydrogenase-elevating virus.</title>
        <authorList>
            <person name="Kuo L.L."/>
            <person name="Harty J.T."/>
            <person name="Erickson L."/>
            <person name="Palmer G.A."/>
            <person name="Plagemann P.G.W."/>
        </authorList>
    </citation>
    <scope>NUCLEOTIDE SEQUENCE [GENOMIC RNA] OF 769-1187 AND 2307-2846</scope>
</reference>
<reference key="4">
    <citation type="journal article" date="1995" name="J. Virol.">
        <title>Processing and evolution of the N-terminal region of the arterivirus replicase ORF1a protein: identification of two papainlike cysteine proteases.</title>
        <authorList>
            <person name="den Boon J.A."/>
            <person name="Faaberg K.S."/>
            <person name="Meulenberg J.J.M."/>
            <person name="Wassenaar A.L.M."/>
            <person name="Plagemann P.G.W."/>
            <person name="Gorbalenya A.E."/>
            <person name="Snijder E.J."/>
        </authorList>
    </citation>
    <scope>ACTIVE SITES OF PCP1-ALPHA AND PCP1-BETA</scope>
    <scope>MUTAGENESIS OF CYS-76 AND CYS-269</scope>
</reference>
<gene>
    <name type="primary">rep</name>
    <name type="ORF">1a-1b</name>
</gene>
<evidence type="ECO:0000250" key="1"/>
<evidence type="ECO:0000250" key="2">
    <source>
        <dbReference type="UniProtKB" id="P0C6X7"/>
    </source>
</evidence>
<evidence type="ECO:0000250" key="3">
    <source>
        <dbReference type="UniProtKB" id="P19811"/>
    </source>
</evidence>
<evidence type="ECO:0000255" key="4"/>
<evidence type="ECO:0000255" key="5">
    <source>
        <dbReference type="PROSITE-ProRule" id="PRU00539"/>
    </source>
</evidence>
<evidence type="ECO:0000255" key="6">
    <source>
        <dbReference type="PROSITE-ProRule" id="PRU00826"/>
    </source>
</evidence>
<evidence type="ECO:0000255" key="7">
    <source>
        <dbReference type="PROSITE-ProRule" id="PRU00871"/>
    </source>
</evidence>
<evidence type="ECO:0000255" key="8">
    <source>
        <dbReference type="PROSITE-ProRule" id="PRU00872"/>
    </source>
</evidence>
<evidence type="ECO:0000255" key="9">
    <source>
        <dbReference type="PROSITE-ProRule" id="PRU00873"/>
    </source>
</evidence>
<evidence type="ECO:0000255" key="10">
    <source>
        <dbReference type="PROSITE-ProRule" id="PRU00985"/>
    </source>
</evidence>
<evidence type="ECO:0000255" key="11">
    <source>
        <dbReference type="PROSITE-ProRule" id="PRU01292"/>
    </source>
</evidence>
<evidence type="ECO:0000255" key="12">
    <source>
        <dbReference type="PROSITE-ProRule" id="PRU01303"/>
    </source>
</evidence>
<evidence type="ECO:0000255" key="13">
    <source>
        <dbReference type="PROSITE-ProRule" id="PRU01306"/>
    </source>
</evidence>
<evidence type="ECO:0000256" key="14">
    <source>
        <dbReference type="SAM" id="MobiDB-lite"/>
    </source>
</evidence>
<evidence type="ECO:0000269" key="15">
    <source>
    </source>
</evidence>
<evidence type="ECO:0000305" key="16"/>